<sequence>MAQPSIGQRIVVDVPSTTANLGPGFDCLGAALDLNNRFAMRRIEGDSGRFELIIEGNEGSHLRGGPNNLIYRAAQRVWKAAGLEPVGLEAKVRLAVPPARGLGSSASAIVAGLVGANALVGEPLSKEKLLELAIDIEGHPDNVVPSLLGGLCLTAKAASQRWRVVRCVWINSVKAVVAIPSIRLSTSEARRAMPKDIPISDAVENLGALTLLLQGLRTGNGDLITDGMHDRLHEPYRWPLIKGGLDVRDAALNAGAWGCAISGAGPSVLALCPEDKGQAVSQAMVKAWEAEGVASRAPLLSIQSGGSHWQPQIEDE</sequence>
<reference key="1">
    <citation type="journal article" date="2003" name="Nature">
        <title>Genome divergence in two Prochlorococcus ecotypes reflects oceanic niche differentiation.</title>
        <authorList>
            <person name="Rocap G."/>
            <person name="Larimer F.W."/>
            <person name="Lamerdin J.E."/>
            <person name="Malfatti S."/>
            <person name="Chain P."/>
            <person name="Ahlgren N.A."/>
            <person name="Arellano A."/>
            <person name="Coleman M."/>
            <person name="Hauser L."/>
            <person name="Hess W.R."/>
            <person name="Johnson Z.I."/>
            <person name="Land M.L."/>
            <person name="Lindell D."/>
            <person name="Post A.F."/>
            <person name="Regala W."/>
            <person name="Shah M."/>
            <person name="Shaw S.L."/>
            <person name="Steglich C."/>
            <person name="Sullivan M.B."/>
            <person name="Ting C.S."/>
            <person name="Tolonen A."/>
            <person name="Webb E.A."/>
            <person name="Zinser E.R."/>
            <person name="Chisholm S.W."/>
        </authorList>
    </citation>
    <scope>NUCLEOTIDE SEQUENCE [LARGE SCALE GENOMIC DNA]</scope>
    <source>
        <strain>MIT 9313</strain>
    </source>
</reference>
<name>KHSE_PROMM</name>
<proteinExistence type="inferred from homology"/>
<organism>
    <name type="scientific">Prochlorococcus marinus (strain MIT 9313)</name>
    <dbReference type="NCBI Taxonomy" id="74547"/>
    <lineage>
        <taxon>Bacteria</taxon>
        <taxon>Bacillati</taxon>
        <taxon>Cyanobacteriota</taxon>
        <taxon>Cyanophyceae</taxon>
        <taxon>Synechococcales</taxon>
        <taxon>Prochlorococcaceae</taxon>
        <taxon>Prochlorococcus</taxon>
    </lineage>
</organism>
<dbReference type="EC" id="2.7.1.39" evidence="1"/>
<dbReference type="EMBL" id="BX548175">
    <property type="protein sequence ID" value="CAE20601.1"/>
    <property type="molecule type" value="Genomic_DNA"/>
</dbReference>
<dbReference type="RefSeq" id="WP_011129805.1">
    <property type="nucleotide sequence ID" value="NC_005071.1"/>
</dbReference>
<dbReference type="SMR" id="Q7V8D0"/>
<dbReference type="KEGG" id="pmt:PMT_0426"/>
<dbReference type="eggNOG" id="COG0083">
    <property type="taxonomic scope" value="Bacteria"/>
</dbReference>
<dbReference type="HOGENOM" id="CLU_041243_0_2_3"/>
<dbReference type="OrthoDB" id="9769912at2"/>
<dbReference type="UniPathway" id="UPA00050">
    <property type="reaction ID" value="UER00064"/>
</dbReference>
<dbReference type="Proteomes" id="UP000001423">
    <property type="component" value="Chromosome"/>
</dbReference>
<dbReference type="GO" id="GO:0005737">
    <property type="term" value="C:cytoplasm"/>
    <property type="evidence" value="ECO:0007669"/>
    <property type="project" value="UniProtKB-SubCell"/>
</dbReference>
<dbReference type="GO" id="GO:0005524">
    <property type="term" value="F:ATP binding"/>
    <property type="evidence" value="ECO:0007669"/>
    <property type="project" value="UniProtKB-UniRule"/>
</dbReference>
<dbReference type="GO" id="GO:0004413">
    <property type="term" value="F:homoserine kinase activity"/>
    <property type="evidence" value="ECO:0007669"/>
    <property type="project" value="UniProtKB-UniRule"/>
</dbReference>
<dbReference type="GO" id="GO:0009088">
    <property type="term" value="P:threonine biosynthetic process"/>
    <property type="evidence" value="ECO:0007669"/>
    <property type="project" value="UniProtKB-UniRule"/>
</dbReference>
<dbReference type="Gene3D" id="3.30.230.10">
    <property type="match status" value="1"/>
</dbReference>
<dbReference type="Gene3D" id="3.30.70.890">
    <property type="entry name" value="GHMP kinase, C-terminal domain"/>
    <property type="match status" value="1"/>
</dbReference>
<dbReference type="HAMAP" id="MF_00384">
    <property type="entry name" value="Homoser_kinase"/>
    <property type="match status" value="1"/>
</dbReference>
<dbReference type="InterPro" id="IPR013750">
    <property type="entry name" value="GHMP_kinase_C_dom"/>
</dbReference>
<dbReference type="InterPro" id="IPR036554">
    <property type="entry name" value="GHMP_kinase_C_sf"/>
</dbReference>
<dbReference type="InterPro" id="IPR006204">
    <property type="entry name" value="GHMP_kinase_N_dom"/>
</dbReference>
<dbReference type="InterPro" id="IPR006203">
    <property type="entry name" value="GHMP_knse_ATP-bd_CS"/>
</dbReference>
<dbReference type="InterPro" id="IPR000870">
    <property type="entry name" value="Homoserine_kinase"/>
</dbReference>
<dbReference type="InterPro" id="IPR020568">
    <property type="entry name" value="Ribosomal_Su5_D2-typ_SF"/>
</dbReference>
<dbReference type="InterPro" id="IPR014721">
    <property type="entry name" value="Ribsml_uS5_D2-typ_fold_subgr"/>
</dbReference>
<dbReference type="NCBIfam" id="NF002288">
    <property type="entry name" value="PRK01212.1-4"/>
    <property type="match status" value="1"/>
</dbReference>
<dbReference type="NCBIfam" id="TIGR00191">
    <property type="entry name" value="thrB"/>
    <property type="match status" value="1"/>
</dbReference>
<dbReference type="PANTHER" id="PTHR20861:SF1">
    <property type="entry name" value="HOMOSERINE KINASE"/>
    <property type="match status" value="1"/>
</dbReference>
<dbReference type="PANTHER" id="PTHR20861">
    <property type="entry name" value="HOMOSERINE/4-DIPHOSPHOCYTIDYL-2-C-METHYL-D-ERYTHRITOL KINASE"/>
    <property type="match status" value="1"/>
</dbReference>
<dbReference type="Pfam" id="PF08544">
    <property type="entry name" value="GHMP_kinases_C"/>
    <property type="match status" value="1"/>
</dbReference>
<dbReference type="Pfam" id="PF00288">
    <property type="entry name" value="GHMP_kinases_N"/>
    <property type="match status" value="1"/>
</dbReference>
<dbReference type="PIRSF" id="PIRSF000676">
    <property type="entry name" value="Homoser_kin"/>
    <property type="match status" value="1"/>
</dbReference>
<dbReference type="PRINTS" id="PR00958">
    <property type="entry name" value="HOMSERKINASE"/>
</dbReference>
<dbReference type="SUPFAM" id="SSF55060">
    <property type="entry name" value="GHMP Kinase, C-terminal domain"/>
    <property type="match status" value="1"/>
</dbReference>
<dbReference type="SUPFAM" id="SSF54211">
    <property type="entry name" value="Ribosomal protein S5 domain 2-like"/>
    <property type="match status" value="1"/>
</dbReference>
<dbReference type="PROSITE" id="PS00627">
    <property type="entry name" value="GHMP_KINASES_ATP"/>
    <property type="match status" value="1"/>
</dbReference>
<gene>
    <name evidence="1" type="primary">thrB</name>
    <name type="ordered locus">PMT_0426</name>
</gene>
<accession>Q7V8D0</accession>
<feature type="chain" id="PRO_0000156598" description="Homoserine kinase">
    <location>
        <begin position="1"/>
        <end position="316"/>
    </location>
</feature>
<feature type="binding site" evidence="1">
    <location>
        <begin position="97"/>
        <end position="107"/>
    </location>
    <ligand>
        <name>ATP</name>
        <dbReference type="ChEBI" id="CHEBI:30616"/>
    </ligand>
</feature>
<evidence type="ECO:0000255" key="1">
    <source>
        <dbReference type="HAMAP-Rule" id="MF_00384"/>
    </source>
</evidence>
<keyword id="KW-0028">Amino-acid biosynthesis</keyword>
<keyword id="KW-0067">ATP-binding</keyword>
<keyword id="KW-0963">Cytoplasm</keyword>
<keyword id="KW-0418">Kinase</keyword>
<keyword id="KW-0547">Nucleotide-binding</keyword>
<keyword id="KW-1185">Reference proteome</keyword>
<keyword id="KW-0791">Threonine biosynthesis</keyword>
<keyword id="KW-0808">Transferase</keyword>
<comment type="function">
    <text evidence="1">Catalyzes the ATP-dependent phosphorylation of L-homoserine to L-homoserine phosphate.</text>
</comment>
<comment type="catalytic activity">
    <reaction evidence="1">
        <text>L-homoserine + ATP = O-phospho-L-homoserine + ADP + H(+)</text>
        <dbReference type="Rhea" id="RHEA:13985"/>
        <dbReference type="ChEBI" id="CHEBI:15378"/>
        <dbReference type="ChEBI" id="CHEBI:30616"/>
        <dbReference type="ChEBI" id="CHEBI:57476"/>
        <dbReference type="ChEBI" id="CHEBI:57590"/>
        <dbReference type="ChEBI" id="CHEBI:456216"/>
        <dbReference type="EC" id="2.7.1.39"/>
    </reaction>
</comment>
<comment type="pathway">
    <text evidence="1">Amino-acid biosynthesis; L-threonine biosynthesis; L-threonine from L-aspartate: step 4/5.</text>
</comment>
<comment type="subcellular location">
    <subcellularLocation>
        <location evidence="1">Cytoplasm</location>
    </subcellularLocation>
</comment>
<comment type="similarity">
    <text evidence="1">Belongs to the GHMP kinase family. Homoserine kinase subfamily.</text>
</comment>
<protein>
    <recommendedName>
        <fullName evidence="1">Homoserine kinase</fullName>
        <shortName evidence="1">HK</shortName>
        <shortName evidence="1">HSK</shortName>
        <ecNumber evidence="1">2.7.1.39</ecNumber>
    </recommendedName>
</protein>